<proteinExistence type="inferred from homology"/>
<comment type="subcellular location">
    <subcellularLocation>
        <location>Plastid</location>
        <location>Chloroplast</location>
    </subcellularLocation>
</comment>
<comment type="similarity">
    <text evidence="1">Belongs to the universal ribosomal protein uS2 family.</text>
</comment>
<geneLocation type="chloroplast"/>
<sequence>MTRRYWNINLKEMIEAGVHFGHGIKKWNPKMAPYISAKRKGTHITNLARTARFLSEACDLVFDAASQGKSFLIVGTKKRAADLVASAAIRSRCHYVNKKWFSGMLTNWSITKTRLSQFRDLRAEEKMGKFHHLPKRDAAILKRKLSTLQRYLGGIKYMTRLPDIVIVLDQQKEYIALQECAILGIPTISLVDTNCDPDLANISIPANDDTMTSIRLILNKLVFAISEGRSLYIRNR</sequence>
<protein>
    <recommendedName>
        <fullName evidence="1">Small ribosomal subunit protein uS2c</fullName>
    </recommendedName>
    <alternativeName>
        <fullName>30S ribosomal protein S2, chloroplastic</fullName>
    </alternativeName>
</protein>
<accession>P16037</accession>
<evidence type="ECO:0000305" key="1"/>
<feature type="chain" id="PRO_0000134300" description="Small ribosomal subunit protein uS2c">
    <location>
        <begin position="1"/>
        <end position="236"/>
    </location>
</feature>
<gene>
    <name type="primary">rps2</name>
</gene>
<reference key="1">
    <citation type="journal article" date="1990" name="Nucleic Acids Res.">
        <title>Nucleotide and derived amino acid sequence of rps2 from maize chloroplasts.</title>
        <authorList>
            <person name="Igloi G.L."/>
            <person name="Meinke A."/>
            <person name="Doery I."/>
            <person name="Koessel H."/>
        </authorList>
    </citation>
    <scope>NUCLEOTIDE SEQUENCE [GENOMIC DNA]</scope>
</reference>
<reference key="2">
    <citation type="journal article" date="1990" name="Nucleic Acids Res.">
        <title>Nucleotide sequence of a 3.46 kb region of maize chloroplast DNA containing the gene cluster rpoC2-rps2-atpI-atpH.</title>
        <authorList>
            <person name="Stahl D."/>
            <person name="Rodermel S."/>
            <person name="Subramanian A.R."/>
            <person name="Bogorad L."/>
        </authorList>
    </citation>
    <scope>NUCLEOTIDE SEQUENCE [GENOMIC DNA]</scope>
    <source>
        <strain>cv. FR9CMSSR37</strain>
        <tissue>Leaf</tissue>
    </source>
</reference>
<reference key="3">
    <citation type="journal article" date="1995" name="J. Mol. Biol.">
        <title>Complete sequence of the maize chloroplast genome: gene content, hotspots of divergence and fine tuning of genetic information by transcript editing.</title>
        <authorList>
            <person name="Maier R.M."/>
            <person name="Neckermann K."/>
            <person name="Igloi G.L."/>
            <person name="Koessel H."/>
        </authorList>
    </citation>
    <scope>NUCLEOTIDE SEQUENCE [LARGE SCALE GENOMIC DNA]</scope>
    <source>
        <strain>cv. B73</strain>
    </source>
</reference>
<reference key="4">
    <citation type="journal article" date="1990" name="Mol. Gen. Genet.">
        <title>Nucleotide sequence of the maize chloroplast rpo B/C1/C2 operon: comparison between the derived protein primary structures from various organisms with respect to functional domains.</title>
        <authorList>
            <person name="Igloi G.L."/>
            <person name="Meinke A."/>
            <person name="Doery I."/>
            <person name="Koessel H."/>
        </authorList>
    </citation>
    <scope>NUCLEOTIDE SEQUENCE [LARGE SCALE GENOMIC DNA] OF 1-36</scope>
    <source>
        <strain>cv. B73</strain>
    </source>
</reference>
<dbReference type="EMBL" id="X17318">
    <property type="protein sequence ID" value="CAA35198.1"/>
    <property type="molecule type" value="Genomic_DNA"/>
</dbReference>
<dbReference type="EMBL" id="X52270">
    <property type="protein sequence ID" value="CAA36512.1"/>
    <property type="molecule type" value="Genomic_DNA"/>
</dbReference>
<dbReference type="EMBL" id="X86563">
    <property type="protein sequence ID" value="CAA60279.1"/>
    <property type="molecule type" value="Genomic_DNA"/>
</dbReference>
<dbReference type="PIR" id="S08249">
    <property type="entry name" value="R3ZM2"/>
</dbReference>
<dbReference type="RefSeq" id="NP_043018.1">
    <property type="nucleotide sequence ID" value="NC_001666.2"/>
</dbReference>
<dbReference type="SMR" id="P16037"/>
<dbReference type="FunCoup" id="P16037">
    <property type="interactions" value="1033"/>
</dbReference>
<dbReference type="STRING" id="4577.P16037"/>
<dbReference type="PaxDb" id="4577-GRMZM2G013798_P01"/>
<dbReference type="GeneID" id="845236"/>
<dbReference type="KEGG" id="zma:845236"/>
<dbReference type="MaizeGDB" id="66014"/>
<dbReference type="eggNOG" id="KOG0832">
    <property type="taxonomic scope" value="Eukaryota"/>
</dbReference>
<dbReference type="HOGENOM" id="CLU_040318_1_2_1"/>
<dbReference type="InParanoid" id="P16037"/>
<dbReference type="OrthoDB" id="773813at2759"/>
<dbReference type="Proteomes" id="UP000007305">
    <property type="component" value="Chloroplast"/>
</dbReference>
<dbReference type="ExpressionAtlas" id="P16037">
    <property type="expression patterns" value="baseline"/>
</dbReference>
<dbReference type="GO" id="GO:0009507">
    <property type="term" value="C:chloroplast"/>
    <property type="evidence" value="ECO:0007669"/>
    <property type="project" value="UniProtKB-SubCell"/>
</dbReference>
<dbReference type="GO" id="GO:0005763">
    <property type="term" value="C:mitochondrial small ribosomal subunit"/>
    <property type="evidence" value="ECO:0000318"/>
    <property type="project" value="GO_Central"/>
</dbReference>
<dbReference type="GO" id="GO:0003735">
    <property type="term" value="F:structural constituent of ribosome"/>
    <property type="evidence" value="ECO:0000318"/>
    <property type="project" value="GO_Central"/>
</dbReference>
<dbReference type="GO" id="GO:0006412">
    <property type="term" value="P:translation"/>
    <property type="evidence" value="ECO:0007669"/>
    <property type="project" value="UniProtKB-UniRule"/>
</dbReference>
<dbReference type="CDD" id="cd01425">
    <property type="entry name" value="RPS2"/>
    <property type="match status" value="1"/>
</dbReference>
<dbReference type="FunFam" id="1.10.287.610:FF:000001">
    <property type="entry name" value="30S ribosomal protein S2"/>
    <property type="match status" value="1"/>
</dbReference>
<dbReference type="Gene3D" id="3.40.50.10490">
    <property type="entry name" value="Glucose-6-phosphate isomerase like protein, domain 1"/>
    <property type="match status" value="1"/>
</dbReference>
<dbReference type="Gene3D" id="1.10.287.610">
    <property type="entry name" value="Helix hairpin bin"/>
    <property type="match status" value="1"/>
</dbReference>
<dbReference type="HAMAP" id="MF_00291_B">
    <property type="entry name" value="Ribosomal_uS2_B"/>
    <property type="match status" value="1"/>
</dbReference>
<dbReference type="InterPro" id="IPR001865">
    <property type="entry name" value="Ribosomal_uS2"/>
</dbReference>
<dbReference type="InterPro" id="IPR005706">
    <property type="entry name" value="Ribosomal_uS2_bac/mit/plastid"/>
</dbReference>
<dbReference type="InterPro" id="IPR018130">
    <property type="entry name" value="Ribosomal_uS2_CS"/>
</dbReference>
<dbReference type="InterPro" id="IPR023591">
    <property type="entry name" value="Ribosomal_uS2_flav_dom_sf"/>
</dbReference>
<dbReference type="NCBIfam" id="TIGR01011">
    <property type="entry name" value="rpsB_bact"/>
    <property type="match status" value="1"/>
</dbReference>
<dbReference type="PANTHER" id="PTHR12534">
    <property type="entry name" value="30S RIBOSOMAL PROTEIN S2 PROKARYOTIC AND ORGANELLAR"/>
    <property type="match status" value="1"/>
</dbReference>
<dbReference type="PANTHER" id="PTHR12534:SF0">
    <property type="entry name" value="SMALL RIBOSOMAL SUBUNIT PROTEIN US2M"/>
    <property type="match status" value="1"/>
</dbReference>
<dbReference type="Pfam" id="PF00318">
    <property type="entry name" value="Ribosomal_S2"/>
    <property type="match status" value="1"/>
</dbReference>
<dbReference type="PRINTS" id="PR00395">
    <property type="entry name" value="RIBOSOMALS2"/>
</dbReference>
<dbReference type="SUPFAM" id="SSF52313">
    <property type="entry name" value="Ribosomal protein S2"/>
    <property type="match status" value="1"/>
</dbReference>
<dbReference type="PROSITE" id="PS00962">
    <property type="entry name" value="RIBOSOMAL_S2_1"/>
    <property type="match status" value="1"/>
</dbReference>
<dbReference type="PROSITE" id="PS00963">
    <property type="entry name" value="RIBOSOMAL_S2_2"/>
    <property type="match status" value="1"/>
</dbReference>
<organism>
    <name type="scientific">Zea mays</name>
    <name type="common">Maize</name>
    <dbReference type="NCBI Taxonomy" id="4577"/>
    <lineage>
        <taxon>Eukaryota</taxon>
        <taxon>Viridiplantae</taxon>
        <taxon>Streptophyta</taxon>
        <taxon>Embryophyta</taxon>
        <taxon>Tracheophyta</taxon>
        <taxon>Spermatophyta</taxon>
        <taxon>Magnoliopsida</taxon>
        <taxon>Liliopsida</taxon>
        <taxon>Poales</taxon>
        <taxon>Poaceae</taxon>
        <taxon>PACMAD clade</taxon>
        <taxon>Panicoideae</taxon>
        <taxon>Andropogonodae</taxon>
        <taxon>Andropogoneae</taxon>
        <taxon>Tripsacinae</taxon>
        <taxon>Zea</taxon>
    </lineage>
</organism>
<name>RR2_MAIZE</name>
<keyword id="KW-0150">Chloroplast</keyword>
<keyword id="KW-0934">Plastid</keyword>
<keyword id="KW-1185">Reference proteome</keyword>
<keyword id="KW-0687">Ribonucleoprotein</keyword>
<keyword id="KW-0689">Ribosomal protein</keyword>